<comment type="function">
    <text>Member of a two-component regulatory system ChvG(ExoS)/ChvI involved in regulating the production of succinoglycan.</text>
</comment>
<comment type="cofactor">
    <cofactor evidence="4">
        <name>Mg(2+)</name>
        <dbReference type="ChEBI" id="CHEBI:18420"/>
    </cofactor>
    <text evidence="4">Binds 1 Mg(2+) ion per subunit.</text>
</comment>
<comment type="pathway">
    <text>Glycan metabolism; exopolysaccharide biosynthesis.</text>
</comment>
<comment type="subcellular location">
    <subcellularLocation>
        <location evidence="4">Cytoplasm</location>
    </subcellularLocation>
</comment>
<comment type="PTM">
    <text evidence="4">Phosphorylated by ChvG.</text>
</comment>
<accession>P50350</accession>
<reference key="1">
    <citation type="journal article" date="1995" name="J. Bacteriol.">
        <title>Identification of Rhizobium-specific intergenic mosaic elements within an essential two-component regulatory system of Rhizobium species.</title>
        <authorList>
            <person name="Oesteraas M."/>
            <person name="Stanley J."/>
            <person name="Finan T.M."/>
        </authorList>
    </citation>
    <scope>NUCLEOTIDE SEQUENCE [GENOMIC DNA]</scope>
    <source>
        <strain>SU47 / 1021</strain>
    </source>
</reference>
<reference key="2">
    <citation type="journal article" date="2001" name="Proc. Natl. Acad. Sci. U.S.A.">
        <title>Analysis of the chromosome sequence of the legume symbiont Sinorhizobium meliloti strain 1021.</title>
        <authorList>
            <person name="Capela D."/>
            <person name="Barloy-Hubler F."/>
            <person name="Gouzy J."/>
            <person name="Bothe G."/>
            <person name="Ampe F."/>
            <person name="Batut J."/>
            <person name="Boistard P."/>
            <person name="Becker A."/>
            <person name="Boutry M."/>
            <person name="Cadieu E."/>
            <person name="Dreano S."/>
            <person name="Gloux S."/>
            <person name="Godrie T."/>
            <person name="Goffeau A."/>
            <person name="Kahn D."/>
            <person name="Kiss E."/>
            <person name="Lelaure V."/>
            <person name="Masuy D."/>
            <person name="Pohl T."/>
            <person name="Portetelle D."/>
            <person name="Puehler A."/>
            <person name="Purnelle B."/>
            <person name="Ramsperger U."/>
            <person name="Renard C."/>
            <person name="Thebault P."/>
            <person name="Vandenbol M."/>
            <person name="Weidner S."/>
            <person name="Galibert F."/>
        </authorList>
    </citation>
    <scope>NUCLEOTIDE SEQUENCE [LARGE SCALE GENOMIC DNA]</scope>
    <source>
        <strain>1021</strain>
    </source>
</reference>
<reference key="3">
    <citation type="journal article" date="2001" name="Science">
        <title>The composite genome of the legume symbiont Sinorhizobium meliloti.</title>
        <authorList>
            <person name="Galibert F."/>
            <person name="Finan T.M."/>
            <person name="Long S.R."/>
            <person name="Puehler A."/>
            <person name="Abola P."/>
            <person name="Ampe F."/>
            <person name="Barloy-Hubler F."/>
            <person name="Barnett M.J."/>
            <person name="Becker A."/>
            <person name="Boistard P."/>
            <person name="Bothe G."/>
            <person name="Boutry M."/>
            <person name="Bowser L."/>
            <person name="Buhrmester J."/>
            <person name="Cadieu E."/>
            <person name="Capela D."/>
            <person name="Chain P."/>
            <person name="Cowie A."/>
            <person name="Davis R.W."/>
            <person name="Dreano S."/>
            <person name="Federspiel N.A."/>
            <person name="Fisher R.F."/>
            <person name="Gloux S."/>
            <person name="Godrie T."/>
            <person name="Goffeau A."/>
            <person name="Golding B."/>
            <person name="Gouzy J."/>
            <person name="Gurjal M."/>
            <person name="Hernandez-Lucas I."/>
            <person name="Hong A."/>
            <person name="Huizar L."/>
            <person name="Hyman R.W."/>
            <person name="Jones T."/>
            <person name="Kahn D."/>
            <person name="Kahn M.L."/>
            <person name="Kalman S."/>
            <person name="Keating D.H."/>
            <person name="Kiss E."/>
            <person name="Komp C."/>
            <person name="Lelaure V."/>
            <person name="Masuy D."/>
            <person name="Palm C."/>
            <person name="Peck M.C."/>
            <person name="Pohl T.M."/>
            <person name="Portetelle D."/>
            <person name="Purnelle B."/>
            <person name="Ramsperger U."/>
            <person name="Surzycki R."/>
            <person name="Thebault P."/>
            <person name="Vandenbol M."/>
            <person name="Vorhoelter F.J."/>
            <person name="Weidner S."/>
            <person name="Wells D.H."/>
            <person name="Wong K."/>
            <person name="Yeh K.-C."/>
            <person name="Batut J."/>
        </authorList>
    </citation>
    <scope>NUCLEOTIDE SEQUENCE [LARGE SCALE GENOMIC DNA]</scope>
    <source>
        <strain>1021</strain>
    </source>
</reference>
<gene>
    <name type="primary">chvI</name>
    <name type="ordered locus">R00044</name>
    <name type="ORF">SMc02560</name>
</gene>
<protein>
    <recommendedName>
        <fullName>Transcriptional regulatory protein ChvI</fullName>
    </recommendedName>
</protein>
<organism>
    <name type="scientific">Rhizobium meliloti (strain 1021)</name>
    <name type="common">Ensifer meliloti</name>
    <name type="synonym">Sinorhizobium meliloti</name>
    <dbReference type="NCBI Taxonomy" id="266834"/>
    <lineage>
        <taxon>Bacteria</taxon>
        <taxon>Pseudomonadati</taxon>
        <taxon>Pseudomonadota</taxon>
        <taxon>Alphaproteobacteria</taxon>
        <taxon>Hyphomicrobiales</taxon>
        <taxon>Rhizobiaceae</taxon>
        <taxon>Sinorhizobium/Ensifer group</taxon>
        <taxon>Sinorhizobium</taxon>
    </lineage>
</organism>
<feature type="chain" id="PRO_0000081059" description="Transcriptional regulatory protein ChvI">
    <location>
        <begin position="1"/>
        <end position="240"/>
    </location>
</feature>
<feature type="domain" description="Response regulatory" evidence="2">
    <location>
        <begin position="3"/>
        <end position="116"/>
    </location>
</feature>
<feature type="DNA-binding region" description="OmpR/PhoB-type" evidence="3">
    <location>
        <begin position="139"/>
        <end position="238"/>
    </location>
</feature>
<feature type="binding site" evidence="1">
    <location>
        <position position="8"/>
    </location>
    <ligand>
        <name>Mg(2+)</name>
        <dbReference type="ChEBI" id="CHEBI:18420"/>
    </ligand>
</feature>
<feature type="binding site" evidence="1">
    <location>
        <position position="9"/>
    </location>
    <ligand>
        <name>Mg(2+)</name>
        <dbReference type="ChEBI" id="CHEBI:18420"/>
    </ligand>
</feature>
<feature type="binding site" evidence="1">
    <location>
        <position position="52"/>
    </location>
    <ligand>
        <name>Mg(2+)</name>
        <dbReference type="ChEBI" id="CHEBI:18420"/>
    </ligand>
</feature>
<feature type="modified residue" description="4-aspartylphosphate" evidence="2">
    <location>
        <position position="52"/>
    </location>
</feature>
<keyword id="KW-0963">Cytoplasm</keyword>
<keyword id="KW-0238">DNA-binding</keyword>
<keyword id="KW-0270">Exopolysaccharide synthesis</keyword>
<keyword id="KW-0460">Magnesium</keyword>
<keyword id="KW-0479">Metal-binding</keyword>
<keyword id="KW-0597">Phosphoprotein</keyword>
<keyword id="KW-1185">Reference proteome</keyword>
<keyword id="KW-0804">Transcription</keyword>
<keyword id="KW-0805">Transcription regulation</keyword>
<keyword id="KW-0902">Two-component regulatory system</keyword>
<proteinExistence type="inferred from homology"/>
<name>CHVI_RHIME</name>
<evidence type="ECO:0000255" key="1"/>
<evidence type="ECO:0000255" key="2">
    <source>
        <dbReference type="PROSITE-ProRule" id="PRU00169"/>
    </source>
</evidence>
<evidence type="ECO:0000255" key="3">
    <source>
        <dbReference type="PROSITE-ProRule" id="PRU01091"/>
    </source>
</evidence>
<evidence type="ECO:0000305" key="4"/>
<dbReference type="EMBL" id="U32941">
    <property type="protein sequence ID" value="AAB07685.1"/>
    <property type="molecule type" value="Genomic_DNA"/>
</dbReference>
<dbReference type="EMBL" id="AL591688">
    <property type="protein sequence ID" value="CAC41431.1"/>
    <property type="molecule type" value="Genomic_DNA"/>
</dbReference>
<dbReference type="RefSeq" id="NP_384150.1">
    <property type="nucleotide sequence ID" value="NC_003047.1"/>
</dbReference>
<dbReference type="RefSeq" id="WP_003531999.1">
    <property type="nucleotide sequence ID" value="NC_003047.1"/>
</dbReference>
<dbReference type="SMR" id="P50350"/>
<dbReference type="EnsemblBacteria" id="CAC41431">
    <property type="protein sequence ID" value="CAC41431"/>
    <property type="gene ID" value="SMc02560"/>
</dbReference>
<dbReference type="GeneID" id="89574360"/>
<dbReference type="KEGG" id="sme:SMc02560"/>
<dbReference type="PATRIC" id="fig|266834.11.peg.1398"/>
<dbReference type="eggNOG" id="COG0745">
    <property type="taxonomic scope" value="Bacteria"/>
</dbReference>
<dbReference type="HOGENOM" id="CLU_000445_30_4_5"/>
<dbReference type="OrthoDB" id="9802426at2"/>
<dbReference type="UniPathway" id="UPA00631"/>
<dbReference type="PRO" id="PR:P50350"/>
<dbReference type="Proteomes" id="UP000001976">
    <property type="component" value="Chromosome"/>
</dbReference>
<dbReference type="CollecTF" id="EXPREG_00000ae0"/>
<dbReference type="GO" id="GO:0005829">
    <property type="term" value="C:cytosol"/>
    <property type="evidence" value="ECO:0007669"/>
    <property type="project" value="TreeGrafter"/>
</dbReference>
<dbReference type="GO" id="GO:0032993">
    <property type="term" value="C:protein-DNA complex"/>
    <property type="evidence" value="ECO:0000353"/>
    <property type="project" value="CollecTF"/>
</dbReference>
<dbReference type="GO" id="GO:0001216">
    <property type="term" value="F:DNA-binding transcription activator activity"/>
    <property type="evidence" value="ECO:0000353"/>
    <property type="project" value="CollecTF"/>
</dbReference>
<dbReference type="GO" id="GO:0046872">
    <property type="term" value="F:metal ion binding"/>
    <property type="evidence" value="ECO:0007669"/>
    <property type="project" value="UniProtKB-KW"/>
</dbReference>
<dbReference type="GO" id="GO:0000156">
    <property type="term" value="F:phosphorelay response regulator activity"/>
    <property type="evidence" value="ECO:0007669"/>
    <property type="project" value="TreeGrafter"/>
</dbReference>
<dbReference type="GO" id="GO:0000976">
    <property type="term" value="F:transcription cis-regulatory region binding"/>
    <property type="evidence" value="ECO:0000353"/>
    <property type="project" value="CollecTF"/>
</dbReference>
<dbReference type="GO" id="GO:0000271">
    <property type="term" value="P:polysaccharide biosynthetic process"/>
    <property type="evidence" value="ECO:0007669"/>
    <property type="project" value="UniProtKB-KW"/>
</dbReference>
<dbReference type="GO" id="GO:0045893">
    <property type="term" value="P:positive regulation of DNA-templated transcription"/>
    <property type="evidence" value="ECO:0000270"/>
    <property type="project" value="CollecTF"/>
</dbReference>
<dbReference type="CDD" id="cd19936">
    <property type="entry name" value="REC_OmpR_ChvI-like"/>
    <property type="match status" value="1"/>
</dbReference>
<dbReference type="CDD" id="cd00383">
    <property type="entry name" value="trans_reg_C"/>
    <property type="match status" value="1"/>
</dbReference>
<dbReference type="FunFam" id="1.10.10.10:FF:000117">
    <property type="entry name" value="Two-component system response regulator BaeR"/>
    <property type="match status" value="1"/>
</dbReference>
<dbReference type="FunFam" id="3.40.50.2300:FF:000086">
    <property type="entry name" value="Two-component system response regulator ChvI"/>
    <property type="match status" value="1"/>
</dbReference>
<dbReference type="Gene3D" id="3.40.50.2300">
    <property type="match status" value="1"/>
</dbReference>
<dbReference type="Gene3D" id="6.10.250.690">
    <property type="match status" value="1"/>
</dbReference>
<dbReference type="Gene3D" id="1.10.10.10">
    <property type="entry name" value="Winged helix-like DNA-binding domain superfamily/Winged helix DNA-binding domain"/>
    <property type="match status" value="1"/>
</dbReference>
<dbReference type="InterPro" id="IPR011006">
    <property type="entry name" value="CheY-like_superfamily"/>
</dbReference>
<dbReference type="InterPro" id="IPR001867">
    <property type="entry name" value="OmpR/PhoB-type_DNA-bd"/>
</dbReference>
<dbReference type="InterPro" id="IPR016032">
    <property type="entry name" value="Sig_transdc_resp-reg_C-effctor"/>
</dbReference>
<dbReference type="InterPro" id="IPR001789">
    <property type="entry name" value="Sig_transdc_resp-reg_receiver"/>
</dbReference>
<dbReference type="InterPro" id="IPR039420">
    <property type="entry name" value="WalR-like"/>
</dbReference>
<dbReference type="InterPro" id="IPR036388">
    <property type="entry name" value="WH-like_DNA-bd_sf"/>
</dbReference>
<dbReference type="PANTHER" id="PTHR48111:SF21">
    <property type="entry name" value="DNA-BINDING DUAL MASTER TRANSCRIPTIONAL REGULATOR RPAA"/>
    <property type="match status" value="1"/>
</dbReference>
<dbReference type="PANTHER" id="PTHR48111">
    <property type="entry name" value="REGULATOR OF RPOS"/>
    <property type="match status" value="1"/>
</dbReference>
<dbReference type="Pfam" id="PF00072">
    <property type="entry name" value="Response_reg"/>
    <property type="match status" value="1"/>
</dbReference>
<dbReference type="Pfam" id="PF00486">
    <property type="entry name" value="Trans_reg_C"/>
    <property type="match status" value="1"/>
</dbReference>
<dbReference type="SMART" id="SM00448">
    <property type="entry name" value="REC"/>
    <property type="match status" value="1"/>
</dbReference>
<dbReference type="SMART" id="SM00862">
    <property type="entry name" value="Trans_reg_C"/>
    <property type="match status" value="1"/>
</dbReference>
<dbReference type="SUPFAM" id="SSF46894">
    <property type="entry name" value="C-terminal effector domain of the bipartite response regulators"/>
    <property type="match status" value="1"/>
</dbReference>
<dbReference type="SUPFAM" id="SSF52172">
    <property type="entry name" value="CheY-like"/>
    <property type="match status" value="1"/>
</dbReference>
<dbReference type="PROSITE" id="PS51755">
    <property type="entry name" value="OMPR_PHOB"/>
    <property type="match status" value="1"/>
</dbReference>
<dbReference type="PROSITE" id="PS50110">
    <property type="entry name" value="RESPONSE_REGULATORY"/>
    <property type="match status" value="1"/>
</dbReference>
<sequence length="240" mass="27158">MQTIALVDDDRNILTSVSIALEAEGYKVETYTDGASALEGLLARPPQLAIFDIKMPRMDGMELLRRLRQKSDLPVIFLTSKDEEIDELFGLKMGADDFITKPFSQRLLVERVKAILRRAANREAAAGGTGPAKNADTPSRSLERGQLVMDQERHTCTWKNESVTLTVTEFLILHALAQRPGVVKSRDALMDAAYDEQVYVDDRTIDSHIKRLRKKFKMVDNDFDMIETLYGVGYRFRETA</sequence>